<reference key="1">
    <citation type="journal article" date="1998" name="Genomics">
        <title>Cloning, characterization, and mapping of the mouse homeobox gene Hmx1.</title>
        <authorList>
            <person name="Yoshiura K."/>
            <person name="Leysens N.J."/>
            <person name="Reiter R.S."/>
            <person name="Murray J.C."/>
        </authorList>
    </citation>
    <scope>NUCLEOTIDE SEQUENCE [GENOMIC DNA / MRNA]</scope>
    <scope>FUNCTION</scope>
    <scope>TISSUE SPECIFICITY</scope>
    <scope>DEVELOPMENTAL STAGE</scope>
    <source>
        <strain>129/Sv</strain>
    </source>
</reference>
<comment type="function">
    <text evidence="3">DNA-binding protein that binds to the 5'-CAAG-3' core sequence. May function as a transcriptional repressor. Seems to act as a transcriptional antagonist of NKX2-5. May play an important role in the development of craniofacial structures such as the eye and ear.</text>
</comment>
<comment type="subcellular location">
    <subcellularLocation>
        <location evidence="4">Nucleus</location>
    </subcellularLocation>
</comment>
<comment type="tissue specificity">
    <text evidence="3">Expressed in neural crest-derived tissues, including, nerve ganglia and cranial mesenchyme.</text>
</comment>
<comment type="developmental stage">
    <text evidence="3">On 9.5 dpc expressed in the trigeminal (V) ganglion. On 10.5-11 dpc, expressed in the eye, second branchial arch and the dorsal root ganglion. On 11.5-12 dpc, expressed in the lens and neural epithelium of the eye. On 14-16 dpc, expressed in the sympathetic ganglon and dorso-lateral mesenchyme near the developing ear.</text>
</comment>
<comment type="similarity">
    <text evidence="4">Belongs to the HMX homeobox family.</text>
</comment>
<sequence>MPDELTEPGRATPARASSFLIENLLAAEAKGAGRSTQGDGVREEEEEDDDDPEDEDPEQARRRLQRRRQQRAGSGPGGEARARALGLGPRPPPGPGPPFALGCGGTTRWYPRVHGGYGGGLSPDTSDRDSPETGEEMGRAESAWPRCPGPGTVPREVTTQGPATGGEEAAELAEAPAVAAAATGEARGGRRKKTRTVFSRSQVFQLESTFDLKRYLSSAERAGLAASLQLTETQVKIWFQNRRNKWKRQLAAELEAASLSPPGAQRLVRVPVLYHESPPAAAGPALPFPLAPPAPAPPPPLLGFSGALAYPLAAFPAAASVPFLRAQMPGLV</sequence>
<name>HMX1_MOUSE</name>
<evidence type="ECO:0000255" key="1">
    <source>
        <dbReference type="PROSITE-ProRule" id="PRU00108"/>
    </source>
</evidence>
<evidence type="ECO:0000256" key="2">
    <source>
        <dbReference type="SAM" id="MobiDB-lite"/>
    </source>
</evidence>
<evidence type="ECO:0000269" key="3">
    <source>
    </source>
</evidence>
<evidence type="ECO:0000305" key="4"/>
<dbReference type="EMBL" id="AF009614">
    <property type="protein sequence ID" value="AAC24193.1"/>
    <property type="molecule type" value="Genomic_DNA"/>
</dbReference>
<dbReference type="EMBL" id="AF009367">
    <property type="protein sequence ID" value="AAC24324.1"/>
    <property type="molecule type" value="mRNA"/>
</dbReference>
<dbReference type="CCDS" id="CCDS19228.1"/>
<dbReference type="RefSeq" id="NP_034575.1">
    <property type="nucleotide sequence ID" value="NM_010445.4"/>
</dbReference>
<dbReference type="SMR" id="O70218"/>
<dbReference type="FunCoup" id="O70218">
    <property type="interactions" value="640"/>
</dbReference>
<dbReference type="STRING" id="10090.ENSMUSP00000084958"/>
<dbReference type="GlyGen" id="O70218">
    <property type="glycosylation" value="1 site"/>
</dbReference>
<dbReference type="iPTMnet" id="O70218"/>
<dbReference type="PhosphoSitePlus" id="O70218"/>
<dbReference type="PaxDb" id="10090-ENSMUSP00000084958"/>
<dbReference type="ProteomicsDB" id="273346"/>
<dbReference type="Antibodypedia" id="4687">
    <property type="antibodies" value="47 antibodies from 15 providers"/>
</dbReference>
<dbReference type="DNASU" id="15371"/>
<dbReference type="Ensembl" id="ENSMUST00000087674.6">
    <property type="protein sequence ID" value="ENSMUSP00000084958.3"/>
    <property type="gene ID" value="ENSMUSG00000067438.6"/>
</dbReference>
<dbReference type="GeneID" id="15371"/>
<dbReference type="KEGG" id="mmu:15371"/>
<dbReference type="UCSC" id="uc008xds.1">
    <property type="organism name" value="mouse"/>
</dbReference>
<dbReference type="AGR" id="MGI:107178"/>
<dbReference type="CTD" id="3166"/>
<dbReference type="MGI" id="MGI:107178">
    <property type="gene designation" value="Hmx1"/>
</dbReference>
<dbReference type="VEuPathDB" id="HostDB:ENSMUSG00000067438"/>
<dbReference type="eggNOG" id="KOG0485">
    <property type="taxonomic scope" value="Eukaryota"/>
</dbReference>
<dbReference type="GeneTree" id="ENSGT00940000162580"/>
<dbReference type="HOGENOM" id="CLU_064096_2_0_1"/>
<dbReference type="InParanoid" id="O70218"/>
<dbReference type="OMA" id="TMEWYRR"/>
<dbReference type="OrthoDB" id="6159439at2759"/>
<dbReference type="PhylomeDB" id="O70218"/>
<dbReference type="TreeFam" id="TF320562"/>
<dbReference type="BioGRID-ORCS" id="15371">
    <property type="hits" value="0 hits in 79 CRISPR screens"/>
</dbReference>
<dbReference type="PRO" id="PR:O70218"/>
<dbReference type="Proteomes" id="UP000000589">
    <property type="component" value="Chromosome 5"/>
</dbReference>
<dbReference type="RNAct" id="O70218">
    <property type="molecule type" value="protein"/>
</dbReference>
<dbReference type="Bgee" id="ENSMUSG00000067438">
    <property type="expression patterns" value="Expressed in superior cervical ganglion and 42 other cell types or tissues"/>
</dbReference>
<dbReference type="ExpressionAtlas" id="O70218">
    <property type="expression patterns" value="baseline and differential"/>
</dbReference>
<dbReference type="GO" id="GO:0005634">
    <property type="term" value="C:nucleus"/>
    <property type="evidence" value="ECO:0000305"/>
    <property type="project" value="UniProtKB"/>
</dbReference>
<dbReference type="GO" id="GO:0003677">
    <property type="term" value="F:DNA binding"/>
    <property type="evidence" value="ECO:0000315"/>
    <property type="project" value="UniProtKB"/>
</dbReference>
<dbReference type="GO" id="GO:0001227">
    <property type="term" value="F:DNA-binding transcription repressor activity, RNA polymerase II-specific"/>
    <property type="evidence" value="ECO:0000315"/>
    <property type="project" value="NTNU_SB"/>
</dbReference>
<dbReference type="GO" id="GO:0000977">
    <property type="term" value="F:RNA polymerase II transcription regulatory region sequence-specific DNA binding"/>
    <property type="evidence" value="ECO:0000315"/>
    <property type="project" value="NTNU_SB"/>
</dbReference>
<dbReference type="GO" id="GO:0043565">
    <property type="term" value="F:sequence-specific DNA binding"/>
    <property type="evidence" value="ECO:0000266"/>
    <property type="project" value="MGI"/>
</dbReference>
<dbReference type="GO" id="GO:0045892">
    <property type="term" value="P:negative regulation of DNA-templated transcription"/>
    <property type="evidence" value="ECO:0000315"/>
    <property type="project" value="UniProtKB"/>
</dbReference>
<dbReference type="GO" id="GO:0000122">
    <property type="term" value="P:negative regulation of transcription by RNA polymerase II"/>
    <property type="evidence" value="ECO:0000315"/>
    <property type="project" value="NTNU_SB"/>
</dbReference>
<dbReference type="CDD" id="cd00086">
    <property type="entry name" value="homeodomain"/>
    <property type="match status" value="1"/>
</dbReference>
<dbReference type="FunFam" id="1.10.10.60:FF:000053">
    <property type="entry name" value="H6 family homeobox 2"/>
    <property type="match status" value="1"/>
</dbReference>
<dbReference type="Gene3D" id="1.10.10.60">
    <property type="entry name" value="Homeodomain-like"/>
    <property type="match status" value="1"/>
</dbReference>
<dbReference type="InterPro" id="IPR001356">
    <property type="entry name" value="HD"/>
</dbReference>
<dbReference type="InterPro" id="IPR020479">
    <property type="entry name" value="HD_metazoa"/>
</dbReference>
<dbReference type="InterPro" id="IPR051300">
    <property type="entry name" value="HMX_Homeobox_TF"/>
</dbReference>
<dbReference type="InterPro" id="IPR017970">
    <property type="entry name" value="Homeobox_CS"/>
</dbReference>
<dbReference type="InterPro" id="IPR009057">
    <property type="entry name" value="Homeodomain-like_sf"/>
</dbReference>
<dbReference type="PANTHER" id="PTHR46110">
    <property type="entry name" value="HOMEOBOX PROTEIN HMX"/>
    <property type="match status" value="1"/>
</dbReference>
<dbReference type="PANTHER" id="PTHR46110:SF1">
    <property type="entry name" value="HOMEOBOX PROTEIN HMX1"/>
    <property type="match status" value="1"/>
</dbReference>
<dbReference type="Pfam" id="PF00046">
    <property type="entry name" value="Homeodomain"/>
    <property type="match status" value="1"/>
</dbReference>
<dbReference type="PRINTS" id="PR00024">
    <property type="entry name" value="HOMEOBOX"/>
</dbReference>
<dbReference type="SMART" id="SM00389">
    <property type="entry name" value="HOX"/>
    <property type="match status" value="1"/>
</dbReference>
<dbReference type="SUPFAM" id="SSF46689">
    <property type="entry name" value="Homeodomain-like"/>
    <property type="match status" value="1"/>
</dbReference>
<dbReference type="PROSITE" id="PS00027">
    <property type="entry name" value="HOMEOBOX_1"/>
    <property type="match status" value="1"/>
</dbReference>
<dbReference type="PROSITE" id="PS50071">
    <property type="entry name" value="HOMEOBOX_2"/>
    <property type="match status" value="1"/>
</dbReference>
<keyword id="KW-0217">Developmental protein</keyword>
<keyword id="KW-0238">DNA-binding</keyword>
<keyword id="KW-0371">Homeobox</keyword>
<keyword id="KW-0539">Nucleus</keyword>
<keyword id="KW-1185">Reference proteome</keyword>
<keyword id="KW-0678">Repressor</keyword>
<keyword id="KW-0804">Transcription</keyword>
<keyword id="KW-0805">Transcription regulation</keyword>
<protein>
    <recommendedName>
        <fullName>Homeobox protein HMX1</fullName>
    </recommendedName>
    <alternativeName>
        <fullName>Homeobox protein H6</fullName>
    </alternativeName>
</protein>
<feature type="chain" id="PRO_0000278454" description="Homeobox protein HMX1">
    <location>
        <begin position="1"/>
        <end position="332"/>
    </location>
</feature>
<feature type="DNA-binding region" description="Homeobox" evidence="1">
    <location>
        <begin position="191"/>
        <end position="250"/>
    </location>
</feature>
<feature type="region of interest" description="Disordered" evidence="2">
    <location>
        <begin position="28"/>
        <end position="170"/>
    </location>
</feature>
<feature type="short sequence motif" description="HMX family specific domain 1">
    <location>
        <begin position="251"/>
        <end position="261"/>
    </location>
</feature>
<feature type="short sequence motif" description="HMX family specific domain 2">
    <location>
        <begin position="264"/>
        <end position="277"/>
    </location>
</feature>
<feature type="compositionally biased region" description="Acidic residues" evidence="2">
    <location>
        <begin position="42"/>
        <end position="57"/>
    </location>
</feature>
<feature type="compositionally biased region" description="Pro residues" evidence="2">
    <location>
        <begin position="89"/>
        <end position="98"/>
    </location>
</feature>
<feature type="compositionally biased region" description="Basic and acidic residues" evidence="2">
    <location>
        <begin position="125"/>
        <end position="139"/>
    </location>
</feature>
<feature type="compositionally biased region" description="Low complexity" evidence="2">
    <location>
        <begin position="161"/>
        <end position="170"/>
    </location>
</feature>
<gene>
    <name type="primary">Hmx1</name>
    <name type="synonym">H6</name>
</gene>
<proteinExistence type="evidence at transcript level"/>
<accession>O70218</accession>
<organism>
    <name type="scientific">Mus musculus</name>
    <name type="common">Mouse</name>
    <dbReference type="NCBI Taxonomy" id="10090"/>
    <lineage>
        <taxon>Eukaryota</taxon>
        <taxon>Metazoa</taxon>
        <taxon>Chordata</taxon>
        <taxon>Craniata</taxon>
        <taxon>Vertebrata</taxon>
        <taxon>Euteleostomi</taxon>
        <taxon>Mammalia</taxon>
        <taxon>Eutheria</taxon>
        <taxon>Euarchontoglires</taxon>
        <taxon>Glires</taxon>
        <taxon>Rodentia</taxon>
        <taxon>Myomorpha</taxon>
        <taxon>Muroidea</taxon>
        <taxon>Muridae</taxon>
        <taxon>Murinae</taxon>
        <taxon>Mus</taxon>
        <taxon>Mus</taxon>
    </lineage>
</organism>